<feature type="chain" id="PRO_0000238929" description="Dihydrolipoamide-residue succinyltransferase component of 2-oxoglutarate dehydrogenase complex">
    <location>
        <begin position="1"/>
        <end position="20" status="greater than"/>
    </location>
</feature>
<feature type="non-terminal residue" evidence="4">
    <location>
        <position position="20"/>
    </location>
</feature>
<organism>
    <name type="scientific">Solanum tuberosum</name>
    <name type="common">Potato</name>
    <dbReference type="NCBI Taxonomy" id="4113"/>
    <lineage>
        <taxon>Eukaryota</taxon>
        <taxon>Viridiplantae</taxon>
        <taxon>Streptophyta</taxon>
        <taxon>Embryophyta</taxon>
        <taxon>Tracheophyta</taxon>
        <taxon>Spermatophyta</taxon>
        <taxon>Magnoliopsida</taxon>
        <taxon>eudicotyledons</taxon>
        <taxon>Gunneridae</taxon>
        <taxon>Pentapetalae</taxon>
        <taxon>asterids</taxon>
        <taxon>lamiids</taxon>
        <taxon>Solanales</taxon>
        <taxon>Solanaceae</taxon>
        <taxon>Solanoideae</taxon>
        <taxon>Solaneae</taxon>
        <taxon>Solanum</taxon>
    </lineage>
</organism>
<protein>
    <recommendedName>
        <fullName>Dihydrolipoamide-residue succinyltransferase component of 2-oxoglutarate dehydrogenase complex</fullName>
        <ecNumber>2.3.1.61</ecNumber>
    </recommendedName>
    <alternativeName>
        <fullName>2-oxoglutarate dehydrogenase complex component E2</fullName>
        <shortName>OGDC-E2</shortName>
    </alternativeName>
    <alternativeName>
        <fullName>Dihydrolipoamide succinyltransferase component of 2-oxoglutarate dehydrogenase complex</fullName>
    </alternativeName>
    <alternativeName>
        <fullName>E2K</fullName>
    </alternativeName>
</protein>
<sequence>XSNSGDLVDAVVPYMGESIS</sequence>
<reference evidence="5" key="1">
    <citation type="journal article" date="1999" name="Biochem. J.">
        <title>Plant mitochondrial 2-oxoglutarate dehydrogenase complex: purification and characterization in potato.</title>
        <authorList>
            <person name="Millar A.H."/>
            <person name="Hill S.A."/>
            <person name="Leaver C.J."/>
        </authorList>
    </citation>
    <scope>PROTEIN SEQUENCE</scope>
    <scope>FUNCTION</scope>
    <scope>CATALYTIC ACTIVITY</scope>
    <scope>SUBCELLULAR LOCATION</scope>
    <source>
        <strain evidence="3">cv. Romano</strain>
        <tissue evidence="3">Tuber</tissue>
    </source>
</reference>
<accession>P81896</accession>
<proteinExistence type="evidence at protein level"/>
<keyword id="KW-0012">Acyltransferase</keyword>
<keyword id="KW-0903">Direct protein sequencing</keyword>
<keyword id="KW-0450">Lipoyl</keyword>
<keyword id="KW-0472">Membrane</keyword>
<keyword id="KW-0496">Mitochondrion</keyword>
<keyword id="KW-1185">Reference proteome</keyword>
<keyword id="KW-0808">Transferase</keyword>
<keyword id="KW-0816">Tricarboxylic acid cycle</keyword>
<evidence type="ECO:0000250" key="1">
    <source>
        <dbReference type="UniProtKB" id="Q01205"/>
    </source>
</evidence>
<evidence type="ECO:0000255" key="2"/>
<evidence type="ECO:0000269" key="3">
    <source>
    </source>
</evidence>
<evidence type="ECO:0000303" key="4">
    <source>
    </source>
</evidence>
<evidence type="ECO:0000305" key="5"/>
<comment type="function">
    <text evidence="3">The 2-oxoglutarate dehydrogenase complex catalyzes the overall conversion of 2-oxoglutarate to succinyl-CoA and CO(2). It contains multiple copies of three enzymatic components: 2-oxoglutarate dehydrogenase (E1), dihydrolipoamide succinyltransferase (E2) and lipoamide dehydrogenase (E3).</text>
</comment>
<comment type="catalytic activity">
    <reaction evidence="3">
        <text>N(6)-[(R)-dihydrolipoyl]-L-lysyl-[protein] + succinyl-CoA = N(6)-[(R)-S(8)-succinyldihydrolipoyl]-L-lysyl-[protein] + CoA</text>
        <dbReference type="Rhea" id="RHEA:15213"/>
        <dbReference type="Rhea" id="RHEA-COMP:10475"/>
        <dbReference type="Rhea" id="RHEA-COMP:20092"/>
        <dbReference type="ChEBI" id="CHEBI:57287"/>
        <dbReference type="ChEBI" id="CHEBI:57292"/>
        <dbReference type="ChEBI" id="CHEBI:83100"/>
        <dbReference type="ChEBI" id="CHEBI:83120"/>
        <dbReference type="EC" id="2.3.1.61"/>
    </reaction>
</comment>
<comment type="cofactor">
    <cofactor evidence="1">
        <name>(R)-lipoate</name>
        <dbReference type="ChEBI" id="CHEBI:83088"/>
    </cofactor>
    <text evidence="1">Binds 1 lipoyl cofactor covalently.</text>
</comment>
<comment type="pathway">
    <text>Amino-acid degradation; L-lysine degradation via saccharopine pathway; glutaryl-CoA from L-lysine: step 6/6.</text>
</comment>
<comment type="subunit">
    <text evidence="1">Forms a 24-polypeptide structural core with octahedral symmetry.</text>
</comment>
<comment type="subcellular location">
    <subcellularLocation>
        <location evidence="3">Mitochondrion membrane</location>
    </subcellularLocation>
</comment>
<comment type="similarity">
    <text evidence="2">Belongs to the 2-oxoacid dehydrogenase family.</text>
</comment>
<name>ODO2_SOLTU</name>
<dbReference type="EC" id="2.3.1.61"/>
<dbReference type="PaxDb" id="4113-PGSC0003DMT400071652"/>
<dbReference type="eggNOG" id="KOG0559">
    <property type="taxonomic scope" value="Eukaryota"/>
</dbReference>
<dbReference type="InParanoid" id="P81896"/>
<dbReference type="BRENDA" id="1.2.1.105">
    <property type="organism ID" value="5757"/>
</dbReference>
<dbReference type="SABIO-RK" id="P81896"/>
<dbReference type="UniPathway" id="UPA00868">
    <property type="reaction ID" value="UER00840"/>
</dbReference>
<dbReference type="Proteomes" id="UP000011115">
    <property type="component" value="Unassembled WGS sequence"/>
</dbReference>
<dbReference type="GO" id="GO:0031966">
    <property type="term" value="C:mitochondrial membrane"/>
    <property type="evidence" value="ECO:0007669"/>
    <property type="project" value="UniProtKB-SubCell"/>
</dbReference>
<dbReference type="GO" id="GO:0004149">
    <property type="term" value="F:dihydrolipoyllysine-residue succinyltransferase activity"/>
    <property type="evidence" value="ECO:0007669"/>
    <property type="project" value="UniProtKB-EC"/>
</dbReference>
<dbReference type="GO" id="GO:0033512">
    <property type="term" value="P:L-lysine catabolic process to acetyl-CoA via saccharopine"/>
    <property type="evidence" value="ECO:0007669"/>
    <property type="project" value="UniProtKB-UniPathway"/>
</dbReference>
<dbReference type="GO" id="GO:0006099">
    <property type="term" value="P:tricarboxylic acid cycle"/>
    <property type="evidence" value="ECO:0007669"/>
    <property type="project" value="UniProtKB-KW"/>
</dbReference>